<dbReference type="EC" id="4.2.1.59" evidence="1"/>
<dbReference type="EMBL" id="CP000901">
    <property type="protein sequence ID" value="ABX86755.1"/>
    <property type="molecule type" value="Genomic_DNA"/>
</dbReference>
<dbReference type="RefSeq" id="WP_002217656.1">
    <property type="nucleotide sequence ID" value="NZ_CP009935.1"/>
</dbReference>
<dbReference type="SMR" id="A9R385"/>
<dbReference type="KEGG" id="ypg:YpAngola_A3424"/>
<dbReference type="PATRIC" id="fig|349746.12.peg.119"/>
<dbReference type="GO" id="GO:0005737">
    <property type="term" value="C:cytoplasm"/>
    <property type="evidence" value="ECO:0007669"/>
    <property type="project" value="UniProtKB-SubCell"/>
</dbReference>
<dbReference type="GO" id="GO:0016020">
    <property type="term" value="C:membrane"/>
    <property type="evidence" value="ECO:0007669"/>
    <property type="project" value="GOC"/>
</dbReference>
<dbReference type="GO" id="GO:0019171">
    <property type="term" value="F:(3R)-hydroxyacyl-[acyl-carrier-protein] dehydratase activity"/>
    <property type="evidence" value="ECO:0007669"/>
    <property type="project" value="UniProtKB-EC"/>
</dbReference>
<dbReference type="GO" id="GO:0006633">
    <property type="term" value="P:fatty acid biosynthetic process"/>
    <property type="evidence" value="ECO:0007669"/>
    <property type="project" value="UniProtKB-UniRule"/>
</dbReference>
<dbReference type="GO" id="GO:0009245">
    <property type="term" value="P:lipid A biosynthetic process"/>
    <property type="evidence" value="ECO:0007669"/>
    <property type="project" value="UniProtKB-UniRule"/>
</dbReference>
<dbReference type="CDD" id="cd01288">
    <property type="entry name" value="FabZ"/>
    <property type="match status" value="1"/>
</dbReference>
<dbReference type="FunFam" id="3.10.129.10:FF:000001">
    <property type="entry name" value="3-hydroxyacyl-[acyl-carrier-protein] dehydratase FabZ"/>
    <property type="match status" value="1"/>
</dbReference>
<dbReference type="Gene3D" id="3.10.129.10">
    <property type="entry name" value="Hotdog Thioesterase"/>
    <property type="match status" value="1"/>
</dbReference>
<dbReference type="HAMAP" id="MF_00406">
    <property type="entry name" value="FabZ"/>
    <property type="match status" value="1"/>
</dbReference>
<dbReference type="InterPro" id="IPR013114">
    <property type="entry name" value="FabA_FabZ"/>
</dbReference>
<dbReference type="InterPro" id="IPR010084">
    <property type="entry name" value="FabZ"/>
</dbReference>
<dbReference type="InterPro" id="IPR029069">
    <property type="entry name" value="HotDog_dom_sf"/>
</dbReference>
<dbReference type="NCBIfam" id="TIGR01750">
    <property type="entry name" value="fabZ"/>
    <property type="match status" value="1"/>
</dbReference>
<dbReference type="NCBIfam" id="NF000582">
    <property type="entry name" value="PRK00006.1"/>
    <property type="match status" value="1"/>
</dbReference>
<dbReference type="PANTHER" id="PTHR30272">
    <property type="entry name" value="3-HYDROXYACYL-[ACYL-CARRIER-PROTEIN] DEHYDRATASE"/>
    <property type="match status" value="1"/>
</dbReference>
<dbReference type="PANTHER" id="PTHR30272:SF1">
    <property type="entry name" value="3-HYDROXYACYL-[ACYL-CARRIER-PROTEIN] DEHYDRATASE"/>
    <property type="match status" value="1"/>
</dbReference>
<dbReference type="Pfam" id="PF07977">
    <property type="entry name" value="FabA"/>
    <property type="match status" value="1"/>
</dbReference>
<dbReference type="SUPFAM" id="SSF54637">
    <property type="entry name" value="Thioesterase/thiol ester dehydrase-isomerase"/>
    <property type="match status" value="1"/>
</dbReference>
<proteinExistence type="inferred from homology"/>
<protein>
    <recommendedName>
        <fullName evidence="1">3-hydroxyacyl-[acyl-carrier-protein] dehydratase FabZ</fullName>
        <ecNumber evidence="1">4.2.1.59</ecNumber>
    </recommendedName>
    <alternativeName>
        <fullName evidence="1">(3R)-hydroxymyristoyl-[acyl-carrier-protein] dehydratase</fullName>
        <shortName evidence="1">(3R)-hydroxymyristoyl-ACP dehydrase</shortName>
    </alternativeName>
    <alternativeName>
        <fullName evidence="1">Beta-hydroxyacyl-ACP dehydratase</fullName>
    </alternativeName>
</protein>
<reference key="1">
    <citation type="journal article" date="2010" name="J. Bacteriol.">
        <title>Genome sequence of the deep-rooted Yersinia pestis strain Angola reveals new insights into the evolution and pangenome of the plague bacterium.</title>
        <authorList>
            <person name="Eppinger M."/>
            <person name="Worsham P.L."/>
            <person name="Nikolich M.P."/>
            <person name="Riley D.R."/>
            <person name="Sebastian Y."/>
            <person name="Mou S."/>
            <person name="Achtman M."/>
            <person name="Lindler L.E."/>
            <person name="Ravel J."/>
        </authorList>
    </citation>
    <scope>NUCLEOTIDE SEQUENCE [LARGE SCALE GENOMIC DNA]</scope>
    <source>
        <strain>Angola</strain>
    </source>
</reference>
<evidence type="ECO:0000255" key="1">
    <source>
        <dbReference type="HAMAP-Rule" id="MF_00406"/>
    </source>
</evidence>
<name>FABZ_YERPG</name>
<feature type="chain" id="PRO_1000197307" description="3-hydroxyacyl-[acyl-carrier-protein] dehydratase FabZ">
    <location>
        <begin position="1"/>
        <end position="176"/>
    </location>
</feature>
<feature type="active site" evidence="1">
    <location>
        <position position="54"/>
    </location>
</feature>
<sequence>MTTDTHTLHIEEILDLLPHRFPFLLVDRVLDFEEGKFLRAVKNVSFNEPFFQGHFPGKPIFPGVLILEAMAQATGILAFKSRGKLEPGELYYFAGIDEARFKRPVVPGDQMIMEVEFVKERRGLTRFTGVAKVDGEIVCTATMMCARSKPAAPAESVVVKPDVVKPDVVNPVVKES</sequence>
<gene>
    <name evidence="1" type="primary">fabZ</name>
    <name type="ordered locus">YpAngola_A3424</name>
</gene>
<organism>
    <name type="scientific">Yersinia pestis bv. Antiqua (strain Angola)</name>
    <dbReference type="NCBI Taxonomy" id="349746"/>
    <lineage>
        <taxon>Bacteria</taxon>
        <taxon>Pseudomonadati</taxon>
        <taxon>Pseudomonadota</taxon>
        <taxon>Gammaproteobacteria</taxon>
        <taxon>Enterobacterales</taxon>
        <taxon>Yersiniaceae</taxon>
        <taxon>Yersinia</taxon>
    </lineage>
</organism>
<keyword id="KW-0963">Cytoplasm</keyword>
<keyword id="KW-0441">Lipid A biosynthesis</keyword>
<keyword id="KW-0444">Lipid biosynthesis</keyword>
<keyword id="KW-0443">Lipid metabolism</keyword>
<keyword id="KW-0456">Lyase</keyword>
<comment type="function">
    <text evidence="1">Involved in unsaturated fatty acids biosynthesis. Catalyzes the dehydration of short chain beta-hydroxyacyl-ACPs and long chain saturated and unsaturated beta-hydroxyacyl-ACPs.</text>
</comment>
<comment type="catalytic activity">
    <reaction evidence="1">
        <text>a (3R)-hydroxyacyl-[ACP] = a (2E)-enoyl-[ACP] + H2O</text>
        <dbReference type="Rhea" id="RHEA:13097"/>
        <dbReference type="Rhea" id="RHEA-COMP:9925"/>
        <dbReference type="Rhea" id="RHEA-COMP:9945"/>
        <dbReference type="ChEBI" id="CHEBI:15377"/>
        <dbReference type="ChEBI" id="CHEBI:78784"/>
        <dbReference type="ChEBI" id="CHEBI:78827"/>
        <dbReference type="EC" id="4.2.1.59"/>
    </reaction>
</comment>
<comment type="subcellular location">
    <subcellularLocation>
        <location evidence="1">Cytoplasm</location>
    </subcellularLocation>
</comment>
<comment type="similarity">
    <text evidence="1">Belongs to the thioester dehydratase family. FabZ subfamily.</text>
</comment>
<accession>A9R385</accession>